<accession>O58584</accession>
<gene>
    <name type="ordered locus">PH0854</name>
    <name type="ORF">PHAL028</name>
</gene>
<name>Y854_PYRHO</name>
<reference key="1">
    <citation type="journal article" date="1998" name="DNA Res.">
        <title>Complete sequence and gene organization of the genome of a hyper-thermophilic archaebacterium, Pyrococcus horikoshii OT3.</title>
        <authorList>
            <person name="Kawarabayasi Y."/>
            <person name="Sawada M."/>
            <person name="Horikawa H."/>
            <person name="Haikawa Y."/>
            <person name="Hino Y."/>
            <person name="Yamamoto S."/>
            <person name="Sekine M."/>
            <person name="Baba S."/>
            <person name="Kosugi H."/>
            <person name="Hosoyama A."/>
            <person name="Nagai Y."/>
            <person name="Sakai M."/>
            <person name="Ogura K."/>
            <person name="Otsuka R."/>
            <person name="Nakazawa H."/>
            <person name="Takamiya M."/>
            <person name="Ohfuku Y."/>
            <person name="Funahashi T."/>
            <person name="Tanaka T."/>
            <person name="Kudoh Y."/>
            <person name="Yamazaki J."/>
            <person name="Kushida N."/>
            <person name="Oguchi A."/>
            <person name="Aoki K."/>
            <person name="Yoshizawa T."/>
            <person name="Nakamura Y."/>
            <person name="Robb F.T."/>
            <person name="Horikoshi K."/>
            <person name="Masuchi Y."/>
            <person name="Shizuya H."/>
            <person name="Kikuchi H."/>
        </authorList>
    </citation>
    <scope>NUCLEOTIDE SEQUENCE [LARGE SCALE GENOMIC DNA]</scope>
    <source>
        <strain>ATCC 700860 / DSM 12428 / JCM 9974 / NBRC 100139 / OT-3</strain>
    </source>
</reference>
<reference key="2">
    <citation type="submission" date="2007-09" db="PDB data bank">
        <title>Crystal structure of putative translation initiation inhibitor PH0854 from Pyrococcus horikoshii.</title>
        <authorList>
            <consortium name="RIKEN structural genomics initiative (RSGI)"/>
        </authorList>
    </citation>
    <scope>X-RAY CRYSTALLOGRAPHY (2.6 ANGSTROMS)</scope>
</reference>
<protein>
    <recommendedName>
        <fullName>RutC family protein PH0854</fullName>
    </recommendedName>
</protein>
<dbReference type="EMBL" id="BA000001">
    <property type="protein sequence ID" value="BAA29948.1"/>
    <property type="status" value="ALT_INIT"/>
    <property type="molecule type" value="Genomic_DNA"/>
</dbReference>
<dbReference type="PIR" id="B71136">
    <property type="entry name" value="B71136"/>
</dbReference>
<dbReference type="RefSeq" id="WP_048053242.1">
    <property type="nucleotide sequence ID" value="NC_000961.1"/>
</dbReference>
<dbReference type="PDB" id="2DYY">
    <property type="method" value="X-ray"/>
    <property type="resolution" value="2.60 A"/>
    <property type="chains" value="A/B/C/D/E/F/G/H/I/J/K/L=1-126"/>
</dbReference>
<dbReference type="PDBsum" id="2DYY"/>
<dbReference type="SMR" id="O58584"/>
<dbReference type="STRING" id="70601.gene:9377805"/>
<dbReference type="EnsemblBacteria" id="BAA29948">
    <property type="protein sequence ID" value="BAA29948"/>
    <property type="gene ID" value="BAA29948"/>
</dbReference>
<dbReference type="GeneID" id="1443181"/>
<dbReference type="KEGG" id="pho:PH0854"/>
<dbReference type="eggNOG" id="arCOG01630">
    <property type="taxonomic scope" value="Archaea"/>
</dbReference>
<dbReference type="OrthoDB" id="371655at2157"/>
<dbReference type="EvolutionaryTrace" id="O58584"/>
<dbReference type="Proteomes" id="UP000000752">
    <property type="component" value="Chromosome"/>
</dbReference>
<dbReference type="GO" id="GO:0005829">
    <property type="term" value="C:cytosol"/>
    <property type="evidence" value="ECO:0007669"/>
    <property type="project" value="TreeGrafter"/>
</dbReference>
<dbReference type="GO" id="GO:0019239">
    <property type="term" value="F:deaminase activity"/>
    <property type="evidence" value="ECO:0007669"/>
    <property type="project" value="TreeGrafter"/>
</dbReference>
<dbReference type="CDD" id="cd00448">
    <property type="entry name" value="YjgF_YER057c_UK114_family"/>
    <property type="match status" value="1"/>
</dbReference>
<dbReference type="FunFam" id="3.30.1330.40:FF:000001">
    <property type="entry name" value="L-PSP family endoribonuclease"/>
    <property type="match status" value="1"/>
</dbReference>
<dbReference type="Gene3D" id="3.30.1330.40">
    <property type="entry name" value="RutC-like"/>
    <property type="match status" value="1"/>
</dbReference>
<dbReference type="InterPro" id="IPR006056">
    <property type="entry name" value="RidA"/>
</dbReference>
<dbReference type="InterPro" id="IPR019897">
    <property type="entry name" value="RidA_CS"/>
</dbReference>
<dbReference type="InterPro" id="IPR035959">
    <property type="entry name" value="RutC-like_sf"/>
</dbReference>
<dbReference type="InterPro" id="IPR006175">
    <property type="entry name" value="YjgF/YER057c/UK114"/>
</dbReference>
<dbReference type="NCBIfam" id="TIGR00004">
    <property type="entry name" value="Rid family detoxifying hydrolase"/>
    <property type="match status" value="1"/>
</dbReference>
<dbReference type="PANTHER" id="PTHR11803">
    <property type="entry name" value="2-IMINOBUTANOATE/2-IMINOPROPANOATE DEAMINASE RIDA"/>
    <property type="match status" value="1"/>
</dbReference>
<dbReference type="PANTHER" id="PTHR11803:SF39">
    <property type="entry name" value="2-IMINOBUTANOATE_2-IMINOPROPANOATE DEAMINASE"/>
    <property type="match status" value="1"/>
</dbReference>
<dbReference type="Pfam" id="PF01042">
    <property type="entry name" value="Ribonuc_L-PSP"/>
    <property type="match status" value="1"/>
</dbReference>
<dbReference type="SUPFAM" id="SSF55298">
    <property type="entry name" value="YjgF-like"/>
    <property type="match status" value="1"/>
</dbReference>
<dbReference type="PROSITE" id="PS01094">
    <property type="entry name" value="UPF0076"/>
    <property type="match status" value="1"/>
</dbReference>
<sequence>MKEVIFTENAPKPIGPYSQAIKAGNFLFIAGQIPIDPKTGEIVKGDIKDQTRQVLENIKAILEAAGYSLNDVIKVTVYLKDMNDFAKMNEVYAEYFGESKPARVAVEVSRLPKDVLIEIEAIAYKE</sequence>
<keyword id="KW-0002">3D-structure</keyword>
<organism>
    <name type="scientific">Pyrococcus horikoshii (strain ATCC 700860 / DSM 12428 / JCM 9974 / NBRC 100139 / OT-3)</name>
    <dbReference type="NCBI Taxonomy" id="70601"/>
    <lineage>
        <taxon>Archaea</taxon>
        <taxon>Methanobacteriati</taxon>
        <taxon>Methanobacteriota</taxon>
        <taxon>Thermococci</taxon>
        <taxon>Thermococcales</taxon>
        <taxon>Thermococcaceae</taxon>
        <taxon>Pyrococcus</taxon>
    </lineage>
</organism>
<comment type="similarity">
    <text evidence="1">Belongs to the RutC family.</text>
</comment>
<comment type="sequence caution" evidence="1">
    <conflict type="erroneous initiation">
        <sequence resource="EMBL-CDS" id="BAA29948"/>
    </conflict>
</comment>
<evidence type="ECO:0000305" key="1"/>
<evidence type="ECO:0007829" key="2">
    <source>
        <dbReference type="PDB" id="2DYY"/>
    </source>
</evidence>
<proteinExistence type="evidence at protein level"/>
<feature type="chain" id="PRO_0000170344" description="RutC family protein PH0854">
    <location>
        <begin position="1"/>
        <end position="126"/>
    </location>
</feature>
<feature type="strand" evidence="2">
    <location>
        <begin position="2"/>
        <end position="5"/>
    </location>
</feature>
<feature type="strand" evidence="2">
    <location>
        <begin position="18"/>
        <end position="23"/>
    </location>
</feature>
<feature type="strand" evidence="2">
    <location>
        <begin position="26"/>
        <end position="32"/>
    </location>
</feature>
<feature type="turn" evidence="2">
    <location>
        <begin position="37"/>
        <end position="39"/>
    </location>
</feature>
<feature type="strand" evidence="2">
    <location>
        <begin position="44"/>
        <end position="46"/>
    </location>
</feature>
<feature type="helix" evidence="2">
    <location>
        <begin position="47"/>
        <end position="64"/>
    </location>
</feature>
<feature type="helix" evidence="2">
    <location>
        <begin position="69"/>
        <end position="71"/>
    </location>
</feature>
<feature type="strand" evidence="2">
    <location>
        <begin position="72"/>
        <end position="79"/>
    </location>
</feature>
<feature type="helix" evidence="2">
    <location>
        <begin position="87"/>
        <end position="96"/>
    </location>
</feature>
<feature type="turn" evidence="2">
    <location>
        <begin position="97"/>
        <end position="99"/>
    </location>
</feature>
<feature type="strand" evidence="2">
    <location>
        <begin position="102"/>
        <end position="107"/>
    </location>
</feature>
<feature type="helix" evidence="2">
    <location>
        <begin position="112"/>
        <end position="114"/>
    </location>
</feature>
<feature type="strand" evidence="2">
    <location>
        <begin position="116"/>
        <end position="124"/>
    </location>
</feature>